<dbReference type="EMBL" id="X60155">
    <property type="protein sequence ID" value="CAB51740.1"/>
    <property type="molecule type" value="mRNA"/>
</dbReference>
<dbReference type="EMBL" id="AJ010017">
    <property type="protein sequence ID" value="CAB53035.1"/>
    <property type="molecule type" value="mRNA"/>
</dbReference>
<dbReference type="EMBL" id="AJ010018">
    <property type="protein sequence ID" value="CAB53036.1"/>
    <property type="molecule type" value="mRNA"/>
</dbReference>
<dbReference type="EMBL" id="AJ010019">
    <property type="protein sequence ID" value="CAB53037.1"/>
    <property type="molecule type" value="mRNA"/>
</dbReference>
<dbReference type="EMBL" id="AJ010020">
    <property type="protein sequence ID" value="CAB53038.1"/>
    <property type="molecule type" value="mRNA"/>
</dbReference>
<dbReference type="EMBL" id="AJ010021">
    <property type="protein sequence ID" value="CAB53039.1"/>
    <property type="molecule type" value="mRNA"/>
</dbReference>
<dbReference type="EMBL" id="AJ010022">
    <property type="protein sequence ID" value="CAB53040.1"/>
    <property type="molecule type" value="mRNA"/>
</dbReference>
<dbReference type="EMBL" id="AJ010023">
    <property type="protein sequence ID" value="CAB53041.1"/>
    <property type="molecule type" value="mRNA"/>
</dbReference>
<dbReference type="EMBL" id="AK290021">
    <property type="protein sequence ID" value="BAF82710.1"/>
    <property type="molecule type" value="mRNA"/>
</dbReference>
<dbReference type="EMBL" id="AK294858">
    <property type="protein sequence ID" value="BAG57962.1"/>
    <property type="molecule type" value="mRNA"/>
</dbReference>
<dbReference type="EMBL" id="AL590223">
    <property type="status" value="NOT_ANNOTATED_CDS"/>
    <property type="molecule type" value="Genomic_DNA"/>
</dbReference>
<dbReference type="EMBL" id="AL590283">
    <property type="status" value="NOT_ANNOTATED_CDS"/>
    <property type="molecule type" value="Genomic_DNA"/>
</dbReference>
<dbReference type="EMBL" id="CH471164">
    <property type="protein sequence ID" value="EAW59303.1"/>
    <property type="molecule type" value="Genomic_DNA"/>
</dbReference>
<dbReference type="EMBL" id="BC015023">
    <property type="protein sequence ID" value="AAH15023.1"/>
    <property type="molecule type" value="mRNA"/>
</dbReference>
<dbReference type="EMBL" id="M92443">
    <property type="protein sequence ID" value="AAA61312.1"/>
    <property type="molecule type" value="Genomic_DNA"/>
</dbReference>
<dbReference type="CCDS" id="CCDS14279.1">
    <molecule id="P51814-6"/>
</dbReference>
<dbReference type="PIR" id="A54661">
    <property type="entry name" value="A54661"/>
</dbReference>
<dbReference type="RefSeq" id="NP_001311068.1">
    <molecule id="P51814-4"/>
    <property type="nucleotide sequence ID" value="NM_001324139.2"/>
</dbReference>
<dbReference type="RefSeq" id="NP_001311069.1">
    <molecule id="P51814-6"/>
    <property type="nucleotide sequence ID" value="NM_001324140.2"/>
</dbReference>
<dbReference type="RefSeq" id="NP_001311070.1">
    <molecule id="P51814-4"/>
    <property type="nucleotide sequence ID" value="NM_001324141.2"/>
</dbReference>
<dbReference type="RefSeq" id="NP_001311071.1">
    <molecule id="P51814-2"/>
    <property type="nucleotide sequence ID" value="NM_001324142.2"/>
</dbReference>
<dbReference type="RefSeq" id="NP_001311072.1">
    <molecule id="P51814-4"/>
    <property type="nucleotide sequence ID" value="NM_001324143.2"/>
</dbReference>
<dbReference type="RefSeq" id="NP_001311073.1">
    <molecule id="P51814-6"/>
    <property type="nucleotide sequence ID" value="NM_001324144.2"/>
</dbReference>
<dbReference type="RefSeq" id="NP_001311074.1">
    <molecule id="P51814-4"/>
    <property type="nucleotide sequence ID" value="NM_001324145.2"/>
</dbReference>
<dbReference type="RefSeq" id="NP_001311076.1">
    <molecule id="P51814-6"/>
    <property type="nucleotide sequence ID" value="NM_001324147.2"/>
</dbReference>
<dbReference type="RefSeq" id="NP_001311077.1">
    <molecule id="P51814-2"/>
    <property type="nucleotide sequence ID" value="NM_001324148.2"/>
</dbReference>
<dbReference type="RefSeq" id="NP_001311078.1">
    <molecule id="P51814-4"/>
    <property type="nucleotide sequence ID" value="NM_001324149.2"/>
</dbReference>
<dbReference type="RefSeq" id="NP_001311079.1">
    <molecule id="P51814-6"/>
    <property type="nucleotide sequence ID" value="NM_001324150.2"/>
</dbReference>
<dbReference type="RefSeq" id="NP_001311080.1">
    <molecule id="P51814-3"/>
    <property type="nucleotide sequence ID" value="NM_001324151.2"/>
</dbReference>
<dbReference type="RefSeq" id="NP_001311081.1">
    <molecule id="P51814-4"/>
    <property type="nucleotide sequence ID" value="NM_001324152.2"/>
</dbReference>
<dbReference type="RefSeq" id="NP_001311082.1">
    <molecule id="P51814-3"/>
    <property type="nucleotide sequence ID" value="NM_001324153.2"/>
</dbReference>
<dbReference type="RefSeq" id="NP_001311083.1">
    <molecule id="P51814-5"/>
    <property type="nucleotide sequence ID" value="NM_001324154.1"/>
</dbReference>
<dbReference type="RefSeq" id="NP_001311084.1">
    <molecule id="P51814-1"/>
    <property type="nucleotide sequence ID" value="NM_001324155.1"/>
</dbReference>
<dbReference type="RefSeq" id="NP_001311085.1">
    <molecule id="P51814-7"/>
    <property type="nucleotide sequence ID" value="NM_001324156.1"/>
</dbReference>
<dbReference type="RefSeq" id="NP_001311086.1">
    <molecule id="P51814-8"/>
    <property type="nucleotide sequence ID" value="NM_001324157.1"/>
</dbReference>
<dbReference type="RefSeq" id="NP_009061.1">
    <molecule id="P51814-6"/>
    <property type="nucleotide sequence ID" value="NM_007130.4"/>
</dbReference>
<dbReference type="RefSeq" id="NP_700359.1">
    <molecule id="P51814-6"/>
    <property type="nucleotide sequence ID" value="NM_153380.3"/>
</dbReference>
<dbReference type="RefSeq" id="XP_006724613.1">
    <molecule id="P51814-5"/>
    <property type="nucleotide sequence ID" value="XM_006724550.4"/>
</dbReference>
<dbReference type="RefSeq" id="XP_006724618.1">
    <molecule id="P51814-3"/>
    <property type="nucleotide sequence ID" value="XM_006724555.4"/>
</dbReference>
<dbReference type="RefSeq" id="XP_016885299.1">
    <molecule id="P51814-5"/>
    <property type="nucleotide sequence ID" value="XM_017029810.3"/>
</dbReference>
<dbReference type="RefSeq" id="XP_016885300.1">
    <molecule id="P51814-5"/>
    <property type="nucleotide sequence ID" value="XM_017029811.3"/>
</dbReference>
<dbReference type="RefSeq" id="XP_016885301.1">
    <molecule id="P51814-5"/>
    <property type="nucleotide sequence ID" value="XM_017029812.2"/>
</dbReference>
<dbReference type="RefSeq" id="XP_016885302.1">
    <molecule id="P51814-5"/>
    <property type="nucleotide sequence ID" value="XM_017029813.2"/>
</dbReference>
<dbReference type="RefSeq" id="XP_016885303.1">
    <molecule id="P51814-5"/>
    <property type="nucleotide sequence ID" value="XM_017029814.3"/>
</dbReference>
<dbReference type="RefSeq" id="XP_016885304.1">
    <molecule id="P51814-5"/>
    <property type="nucleotide sequence ID" value="XM_017029815.2"/>
</dbReference>
<dbReference type="RefSeq" id="XP_016885305.1">
    <molecule id="P51814-3"/>
    <property type="nucleotide sequence ID" value="XM_017029816.2"/>
</dbReference>
<dbReference type="RefSeq" id="XP_016885306.1">
    <molecule id="P51814-6"/>
    <property type="nucleotide sequence ID" value="XM_017029817.2"/>
</dbReference>
<dbReference type="RefSeq" id="XP_047298427.1">
    <molecule id="P51814-5"/>
    <property type="nucleotide sequence ID" value="XM_047442471.1"/>
</dbReference>
<dbReference type="RefSeq" id="XP_047298428.1">
    <molecule id="P51814-3"/>
    <property type="nucleotide sequence ID" value="XM_047442472.1"/>
</dbReference>
<dbReference type="RefSeq" id="XP_047298429.1">
    <molecule id="P51814-3"/>
    <property type="nucleotide sequence ID" value="XM_047442473.1"/>
</dbReference>
<dbReference type="RefSeq" id="XP_047298430.1">
    <molecule id="P51814-3"/>
    <property type="nucleotide sequence ID" value="XM_047442474.1"/>
</dbReference>
<dbReference type="RefSeq" id="XP_047298431.1">
    <molecule id="P51814-2"/>
    <property type="nucleotide sequence ID" value="XM_047442475.1"/>
</dbReference>
<dbReference type="RefSeq" id="XP_047298432.1">
    <molecule id="P51814-2"/>
    <property type="nucleotide sequence ID" value="XM_047442476.1"/>
</dbReference>
<dbReference type="RefSeq" id="XP_047298433.1">
    <molecule id="P51814-2"/>
    <property type="nucleotide sequence ID" value="XM_047442477.1"/>
</dbReference>
<dbReference type="RefSeq" id="XP_047298434.1">
    <molecule id="P51814-2"/>
    <property type="nucleotide sequence ID" value="XM_047442478.1"/>
</dbReference>
<dbReference type="RefSeq" id="XP_047298435.1">
    <molecule id="P51814-2"/>
    <property type="nucleotide sequence ID" value="XM_047442479.1"/>
</dbReference>
<dbReference type="RefSeq" id="XP_047298436.1">
    <molecule id="P51814-2"/>
    <property type="nucleotide sequence ID" value="XM_047442480.1"/>
</dbReference>
<dbReference type="RefSeq" id="XP_047298437.1">
    <molecule id="P51814-6"/>
    <property type="nucleotide sequence ID" value="XM_047442481.1"/>
</dbReference>
<dbReference type="RefSeq" id="XP_047298438.1">
    <molecule id="P51814-6"/>
    <property type="nucleotide sequence ID" value="XM_047442482.1"/>
</dbReference>
<dbReference type="RefSeq" id="XP_047298439.1">
    <molecule id="P51814-4"/>
    <property type="nucleotide sequence ID" value="XM_047442483.1"/>
</dbReference>
<dbReference type="RefSeq" id="XP_047298440.1">
    <molecule id="P51814-4"/>
    <property type="nucleotide sequence ID" value="XM_047442484.1"/>
</dbReference>
<dbReference type="RefSeq" id="XP_054183754.1">
    <molecule id="P51814-5"/>
    <property type="nucleotide sequence ID" value="XM_054327779.1"/>
</dbReference>
<dbReference type="RefSeq" id="XP_054183755.1">
    <molecule id="P51814-5"/>
    <property type="nucleotide sequence ID" value="XM_054327780.1"/>
</dbReference>
<dbReference type="RefSeq" id="XP_054183756.1">
    <molecule id="P51814-5"/>
    <property type="nucleotide sequence ID" value="XM_054327781.1"/>
</dbReference>
<dbReference type="RefSeq" id="XP_054183757.1">
    <molecule id="P51814-5"/>
    <property type="nucleotide sequence ID" value="XM_054327782.1"/>
</dbReference>
<dbReference type="RefSeq" id="XP_054183758.1">
    <molecule id="P51814-5"/>
    <property type="nucleotide sequence ID" value="XM_054327783.1"/>
</dbReference>
<dbReference type="RefSeq" id="XP_054183759.1">
    <molecule id="P51814-5"/>
    <property type="nucleotide sequence ID" value="XM_054327784.1"/>
</dbReference>
<dbReference type="RefSeq" id="XP_054183760.1">
    <molecule id="P51814-5"/>
    <property type="nucleotide sequence ID" value="XM_054327785.1"/>
</dbReference>
<dbReference type="RefSeq" id="XP_054183761.1">
    <molecule id="P51814-5"/>
    <property type="nucleotide sequence ID" value="XM_054327786.1"/>
</dbReference>
<dbReference type="RefSeq" id="XP_054183762.1">
    <molecule id="P51814-3"/>
    <property type="nucleotide sequence ID" value="XM_054327787.1"/>
</dbReference>
<dbReference type="RefSeq" id="XP_054183763.1">
    <molecule id="P51814-3"/>
    <property type="nucleotide sequence ID" value="XM_054327788.1"/>
</dbReference>
<dbReference type="RefSeq" id="XP_054183764.1">
    <molecule id="P51814-3"/>
    <property type="nucleotide sequence ID" value="XM_054327789.1"/>
</dbReference>
<dbReference type="RefSeq" id="XP_054183765.1">
    <molecule id="P51814-3"/>
    <property type="nucleotide sequence ID" value="XM_054327790.1"/>
</dbReference>
<dbReference type="RefSeq" id="XP_054183766.1">
    <molecule id="P51814-3"/>
    <property type="nucleotide sequence ID" value="XM_054327791.1"/>
</dbReference>
<dbReference type="RefSeq" id="XP_054183767.1">
    <molecule id="P51814-2"/>
    <property type="nucleotide sequence ID" value="XM_054327792.1"/>
</dbReference>
<dbReference type="RefSeq" id="XP_054183768.1">
    <molecule id="P51814-2"/>
    <property type="nucleotide sequence ID" value="XM_054327793.1"/>
</dbReference>
<dbReference type="RefSeq" id="XP_054183769.1">
    <molecule id="P51814-2"/>
    <property type="nucleotide sequence ID" value="XM_054327794.1"/>
</dbReference>
<dbReference type="RefSeq" id="XP_054183770.1">
    <molecule id="P51814-2"/>
    <property type="nucleotide sequence ID" value="XM_054327795.1"/>
</dbReference>
<dbReference type="RefSeq" id="XP_054183771.1">
    <molecule id="P51814-2"/>
    <property type="nucleotide sequence ID" value="XM_054327796.1"/>
</dbReference>
<dbReference type="RefSeq" id="XP_054183772.1">
    <molecule id="P51814-2"/>
    <property type="nucleotide sequence ID" value="XM_054327797.1"/>
</dbReference>
<dbReference type="RefSeq" id="XP_054183773.1">
    <molecule id="P51814-6"/>
    <property type="nucleotide sequence ID" value="XM_054327798.1"/>
</dbReference>
<dbReference type="RefSeq" id="XP_054183774.1">
    <molecule id="P51814-6"/>
    <property type="nucleotide sequence ID" value="XM_054327799.1"/>
</dbReference>
<dbReference type="RefSeq" id="XP_054183775.1">
    <molecule id="P51814-6"/>
    <property type="nucleotide sequence ID" value="XM_054327800.1"/>
</dbReference>
<dbReference type="RefSeq" id="XP_054183776.1">
    <molecule id="P51814-4"/>
    <property type="nucleotide sequence ID" value="XM_054327801.1"/>
</dbReference>
<dbReference type="RefSeq" id="XP_054183777.1">
    <molecule id="P51814-4"/>
    <property type="nucleotide sequence ID" value="XM_054327802.1"/>
</dbReference>
<dbReference type="SMR" id="P51814"/>
<dbReference type="BioGRID" id="113418">
    <property type="interactions" value="9"/>
</dbReference>
<dbReference type="FunCoup" id="P51814">
    <property type="interactions" value="10"/>
</dbReference>
<dbReference type="IntAct" id="P51814">
    <property type="interactions" value="9"/>
</dbReference>
<dbReference type="MINT" id="P51814"/>
<dbReference type="STRING" id="9606.ENSP00000366265"/>
<dbReference type="GlyGen" id="P51814">
    <property type="glycosylation" value="1 site, 1 O-linked glycan (1 site)"/>
</dbReference>
<dbReference type="iPTMnet" id="P51814"/>
<dbReference type="PhosphoSitePlus" id="P51814"/>
<dbReference type="BioMuta" id="ZNF41"/>
<dbReference type="DMDM" id="20141930"/>
<dbReference type="jPOST" id="P51814"/>
<dbReference type="MassIVE" id="P51814"/>
<dbReference type="PeptideAtlas" id="P51814"/>
<dbReference type="ProteomicsDB" id="56410">
    <molecule id="P51814-1"/>
</dbReference>
<dbReference type="ProteomicsDB" id="56411">
    <molecule id="P51814-2"/>
</dbReference>
<dbReference type="ProteomicsDB" id="56412">
    <molecule id="P51814-3"/>
</dbReference>
<dbReference type="ProteomicsDB" id="56413">
    <molecule id="P51814-4"/>
</dbReference>
<dbReference type="ProteomicsDB" id="56414">
    <molecule id="P51814-5"/>
</dbReference>
<dbReference type="ProteomicsDB" id="56415">
    <molecule id="P51814-6"/>
</dbReference>
<dbReference type="ProteomicsDB" id="56416">
    <molecule id="P51814-7"/>
</dbReference>
<dbReference type="ProteomicsDB" id="56417">
    <molecule id="P51814-8"/>
</dbReference>
<dbReference type="ABCD" id="P51814">
    <property type="antibodies" value="1 sequenced antibody"/>
</dbReference>
<dbReference type="Antibodypedia" id="25429">
    <property type="antibodies" value="248 antibodies from 19 providers"/>
</dbReference>
<dbReference type="DNASU" id="7592"/>
<dbReference type="Ensembl" id="ENST00000313116.11">
    <molecule id="P51814-6"/>
    <property type="protein sequence ID" value="ENSP00000315173.7"/>
    <property type="gene ID" value="ENSG00000147124.13"/>
</dbReference>
<dbReference type="Ensembl" id="ENST00000377065.8">
    <molecule id="P51814-6"/>
    <property type="protein sequence ID" value="ENSP00000366265.4"/>
    <property type="gene ID" value="ENSG00000147124.13"/>
</dbReference>
<dbReference type="Ensembl" id="ENST00000684689.1">
    <molecule id="P51814-6"/>
    <property type="protein sequence ID" value="ENSP00000508254.1"/>
    <property type="gene ID" value="ENSG00000147124.13"/>
</dbReference>
<dbReference type="GeneID" id="7592"/>
<dbReference type="KEGG" id="hsa:7592"/>
<dbReference type="MANE-Select" id="ENST00000684689.1">
    <molecule id="P51814-6"/>
    <property type="protein sequence ID" value="ENSP00000508254.1"/>
    <property type="RefSeq nucleotide sequence ID" value="NM_001324144.2"/>
    <property type="RefSeq protein sequence ID" value="NP_001311073.1"/>
</dbReference>
<dbReference type="UCSC" id="uc004dhx.5">
    <molecule id="P51814-1"/>
    <property type="organism name" value="human"/>
</dbReference>
<dbReference type="AGR" id="HGNC:13107"/>
<dbReference type="CTD" id="7592"/>
<dbReference type="DisGeNET" id="7592"/>
<dbReference type="GeneCards" id="ZNF41"/>
<dbReference type="HGNC" id="HGNC:13107">
    <property type="gene designation" value="ZNF41"/>
</dbReference>
<dbReference type="HPA" id="ENSG00000147124">
    <property type="expression patterns" value="Low tissue specificity"/>
</dbReference>
<dbReference type="MalaCards" id="ZNF41"/>
<dbReference type="MIM" id="314995">
    <property type="type" value="gene"/>
</dbReference>
<dbReference type="neXtProt" id="NX_P51814"/>
<dbReference type="OpenTargets" id="ENSG00000147124"/>
<dbReference type="PharmGKB" id="PA37682"/>
<dbReference type="VEuPathDB" id="HostDB:ENSG00000147124"/>
<dbReference type="eggNOG" id="KOG1721">
    <property type="taxonomic scope" value="Eukaryota"/>
</dbReference>
<dbReference type="GeneTree" id="ENSGT00940000163107"/>
<dbReference type="HOGENOM" id="CLU_002678_17_1_1"/>
<dbReference type="InParanoid" id="P51814"/>
<dbReference type="OMA" id="CNKDENI"/>
<dbReference type="OrthoDB" id="9411774at2759"/>
<dbReference type="PAN-GO" id="P51814">
    <property type="GO annotations" value="4 GO annotations based on evolutionary models"/>
</dbReference>
<dbReference type="PhylomeDB" id="P51814"/>
<dbReference type="TreeFam" id="TF350810"/>
<dbReference type="PathwayCommons" id="P51814"/>
<dbReference type="Reactome" id="R-HSA-212436">
    <property type="pathway name" value="Generic Transcription Pathway"/>
</dbReference>
<dbReference type="SignaLink" id="P51814"/>
<dbReference type="BioGRID-ORCS" id="7592">
    <property type="hits" value="15 hits in 804 CRISPR screens"/>
</dbReference>
<dbReference type="ChiTaRS" id="ZNF41">
    <property type="organism name" value="human"/>
</dbReference>
<dbReference type="GeneWiki" id="ZNF41"/>
<dbReference type="GenomeRNAi" id="7592"/>
<dbReference type="Pharos" id="P51814">
    <property type="development level" value="Tbio"/>
</dbReference>
<dbReference type="PRO" id="PR:P51814"/>
<dbReference type="Proteomes" id="UP000005640">
    <property type="component" value="Chromosome X"/>
</dbReference>
<dbReference type="RNAct" id="P51814">
    <property type="molecule type" value="protein"/>
</dbReference>
<dbReference type="Bgee" id="ENSG00000147124">
    <property type="expression patterns" value="Expressed in muscle of leg and 115 other cell types or tissues"/>
</dbReference>
<dbReference type="ExpressionAtlas" id="P51814">
    <property type="expression patterns" value="baseline and differential"/>
</dbReference>
<dbReference type="GO" id="GO:0005634">
    <property type="term" value="C:nucleus"/>
    <property type="evidence" value="ECO:0007669"/>
    <property type="project" value="UniProtKB-SubCell"/>
</dbReference>
<dbReference type="GO" id="GO:0003677">
    <property type="term" value="F:DNA binding"/>
    <property type="evidence" value="ECO:0007669"/>
    <property type="project" value="UniProtKB-KW"/>
</dbReference>
<dbReference type="GO" id="GO:0008270">
    <property type="term" value="F:zinc ion binding"/>
    <property type="evidence" value="ECO:0007669"/>
    <property type="project" value="UniProtKB-KW"/>
</dbReference>
<dbReference type="GO" id="GO:0006355">
    <property type="term" value="P:regulation of DNA-templated transcription"/>
    <property type="evidence" value="ECO:0007669"/>
    <property type="project" value="InterPro"/>
</dbReference>
<dbReference type="CDD" id="cd07765">
    <property type="entry name" value="KRAB_A-box"/>
    <property type="match status" value="1"/>
</dbReference>
<dbReference type="FunFam" id="3.30.160.60:FF:002063">
    <property type="entry name" value="RB associated KRAB zinc finger"/>
    <property type="match status" value="2"/>
</dbReference>
<dbReference type="FunFam" id="3.30.160.60:FF:000478">
    <property type="entry name" value="Zinc finger protein 133"/>
    <property type="match status" value="1"/>
</dbReference>
<dbReference type="FunFam" id="3.30.160.60:FF:000295">
    <property type="entry name" value="zinc finger protein 19"/>
    <property type="match status" value="2"/>
</dbReference>
<dbReference type="FunFam" id="3.30.160.60:FF:002343">
    <property type="entry name" value="Zinc finger protein 33A"/>
    <property type="match status" value="2"/>
</dbReference>
<dbReference type="FunFam" id="3.30.160.60:FF:000848">
    <property type="entry name" value="Zinc finger protein 35"/>
    <property type="match status" value="1"/>
</dbReference>
<dbReference type="FunFam" id="3.30.160.60:FF:000268">
    <property type="entry name" value="zinc finger protein 484 isoform X2"/>
    <property type="match status" value="5"/>
</dbReference>
<dbReference type="FunFam" id="3.30.160.60:FF:001270">
    <property type="entry name" value="zinc finger protein 583 isoform X1"/>
    <property type="match status" value="1"/>
</dbReference>
<dbReference type="FunFam" id="3.30.160.60:FF:001396">
    <property type="entry name" value="Zinc finger protein 585A"/>
    <property type="match status" value="3"/>
</dbReference>
<dbReference type="Gene3D" id="6.10.140.140">
    <property type="match status" value="1"/>
</dbReference>
<dbReference type="Gene3D" id="3.30.160.60">
    <property type="entry name" value="Classic Zinc Finger"/>
    <property type="match status" value="17"/>
</dbReference>
<dbReference type="InterPro" id="IPR001909">
    <property type="entry name" value="KRAB"/>
</dbReference>
<dbReference type="InterPro" id="IPR036051">
    <property type="entry name" value="KRAB_dom_sf"/>
</dbReference>
<dbReference type="InterPro" id="IPR036236">
    <property type="entry name" value="Znf_C2H2_sf"/>
</dbReference>
<dbReference type="InterPro" id="IPR013087">
    <property type="entry name" value="Znf_C2H2_type"/>
</dbReference>
<dbReference type="PANTHER" id="PTHR23226">
    <property type="entry name" value="ZINC FINGER AND SCAN DOMAIN-CONTAINING"/>
    <property type="match status" value="1"/>
</dbReference>
<dbReference type="PANTHER" id="PTHR23226:SF437">
    <property type="entry name" value="ZINC FINGER PROTEIN 27"/>
    <property type="match status" value="1"/>
</dbReference>
<dbReference type="Pfam" id="PF01352">
    <property type="entry name" value="KRAB"/>
    <property type="match status" value="1"/>
</dbReference>
<dbReference type="Pfam" id="PF00096">
    <property type="entry name" value="zf-C2H2"/>
    <property type="match status" value="17"/>
</dbReference>
<dbReference type="SMART" id="SM00349">
    <property type="entry name" value="KRAB"/>
    <property type="match status" value="1"/>
</dbReference>
<dbReference type="SMART" id="SM00355">
    <property type="entry name" value="ZnF_C2H2"/>
    <property type="match status" value="17"/>
</dbReference>
<dbReference type="SUPFAM" id="SSF57667">
    <property type="entry name" value="beta-beta-alpha zinc fingers"/>
    <property type="match status" value="10"/>
</dbReference>
<dbReference type="SUPFAM" id="SSF109640">
    <property type="entry name" value="KRAB domain (Kruppel-associated box)"/>
    <property type="match status" value="1"/>
</dbReference>
<dbReference type="PROSITE" id="PS50805">
    <property type="entry name" value="KRAB"/>
    <property type="match status" value="1"/>
</dbReference>
<dbReference type="PROSITE" id="PS00028">
    <property type="entry name" value="ZINC_FINGER_C2H2_1"/>
    <property type="match status" value="17"/>
</dbReference>
<dbReference type="PROSITE" id="PS50157">
    <property type="entry name" value="ZINC_FINGER_C2H2_2"/>
    <property type="match status" value="18"/>
</dbReference>
<reference key="1">
    <citation type="journal article" date="1999" name="Cytogenet. Cell Genet.">
        <title>Coding region intron/exon organization, alternative splicing and X-chromosome inactivation of the KRAB/FPB-domain-containing human zinc finger gene ZNF41.</title>
        <authorList>
            <person name="Rosati M."/>
            <person name="Franze A."/>
            <person name="Matarazzo M.R."/>
            <person name="Grimaldi G."/>
        </authorList>
    </citation>
    <scope>NUCLEOTIDE SEQUENCE [MRNA]</scope>
    <scope>ALTERNATIVE SPLICING</scope>
</reference>
<reference key="2">
    <citation type="journal article" date="2004" name="Nat. Genet.">
        <title>Complete sequencing and characterization of 21,243 full-length human cDNAs.</title>
        <authorList>
            <person name="Ota T."/>
            <person name="Suzuki Y."/>
            <person name="Nishikawa T."/>
            <person name="Otsuki T."/>
            <person name="Sugiyama T."/>
            <person name="Irie R."/>
            <person name="Wakamatsu A."/>
            <person name="Hayashi K."/>
            <person name="Sato H."/>
            <person name="Nagai K."/>
            <person name="Kimura K."/>
            <person name="Makita H."/>
            <person name="Sekine M."/>
            <person name="Obayashi M."/>
            <person name="Nishi T."/>
            <person name="Shibahara T."/>
            <person name="Tanaka T."/>
            <person name="Ishii S."/>
            <person name="Yamamoto J."/>
            <person name="Saito K."/>
            <person name="Kawai Y."/>
            <person name="Isono Y."/>
            <person name="Nakamura Y."/>
            <person name="Nagahari K."/>
            <person name="Murakami K."/>
            <person name="Yasuda T."/>
            <person name="Iwayanagi T."/>
            <person name="Wagatsuma M."/>
            <person name="Shiratori A."/>
            <person name="Sudo H."/>
            <person name="Hosoiri T."/>
            <person name="Kaku Y."/>
            <person name="Kodaira H."/>
            <person name="Kondo H."/>
            <person name="Sugawara M."/>
            <person name="Takahashi M."/>
            <person name="Kanda K."/>
            <person name="Yokoi T."/>
            <person name="Furuya T."/>
            <person name="Kikkawa E."/>
            <person name="Omura Y."/>
            <person name="Abe K."/>
            <person name="Kamihara K."/>
            <person name="Katsuta N."/>
            <person name="Sato K."/>
            <person name="Tanikawa M."/>
            <person name="Yamazaki M."/>
            <person name="Ninomiya K."/>
            <person name="Ishibashi T."/>
            <person name="Yamashita H."/>
            <person name="Murakawa K."/>
            <person name="Fujimori K."/>
            <person name="Tanai H."/>
            <person name="Kimata M."/>
            <person name="Watanabe M."/>
            <person name="Hiraoka S."/>
            <person name="Chiba Y."/>
            <person name="Ishida S."/>
            <person name="Ono Y."/>
            <person name="Takiguchi S."/>
            <person name="Watanabe S."/>
            <person name="Yosida M."/>
            <person name="Hotuta T."/>
            <person name="Kusano J."/>
            <person name="Kanehori K."/>
            <person name="Takahashi-Fujii A."/>
            <person name="Hara H."/>
            <person name="Tanase T.-O."/>
            <person name="Nomura Y."/>
            <person name="Togiya S."/>
            <person name="Komai F."/>
            <person name="Hara R."/>
            <person name="Takeuchi K."/>
            <person name="Arita M."/>
            <person name="Imose N."/>
            <person name="Musashino K."/>
            <person name="Yuuki H."/>
            <person name="Oshima A."/>
            <person name="Sasaki N."/>
            <person name="Aotsuka S."/>
            <person name="Yoshikawa Y."/>
            <person name="Matsunawa H."/>
            <person name="Ichihara T."/>
            <person name="Shiohata N."/>
            <person name="Sano S."/>
            <person name="Moriya S."/>
            <person name="Momiyama H."/>
            <person name="Satoh N."/>
            <person name="Takami S."/>
            <person name="Terashima Y."/>
            <person name="Suzuki O."/>
            <person name="Nakagawa S."/>
            <person name="Senoh A."/>
            <person name="Mizoguchi H."/>
            <person name="Goto Y."/>
            <person name="Shimizu F."/>
            <person name="Wakebe H."/>
            <person name="Hishigaki H."/>
            <person name="Watanabe T."/>
            <person name="Sugiyama A."/>
            <person name="Takemoto M."/>
            <person name="Kawakami B."/>
            <person name="Yamazaki M."/>
            <person name="Watanabe K."/>
            <person name="Kumagai A."/>
            <person name="Itakura S."/>
            <person name="Fukuzumi Y."/>
            <person name="Fujimori Y."/>
            <person name="Komiyama M."/>
            <person name="Tashiro H."/>
            <person name="Tanigami A."/>
            <person name="Fujiwara T."/>
            <person name="Ono T."/>
            <person name="Yamada K."/>
            <person name="Fujii Y."/>
            <person name="Ozaki K."/>
            <person name="Hirao M."/>
            <person name="Ohmori Y."/>
            <person name="Kawabata A."/>
            <person name="Hikiji T."/>
            <person name="Kobatake N."/>
            <person name="Inagaki H."/>
            <person name="Ikema Y."/>
            <person name="Okamoto S."/>
            <person name="Okitani R."/>
            <person name="Kawakami T."/>
            <person name="Noguchi S."/>
            <person name="Itoh T."/>
            <person name="Shigeta K."/>
            <person name="Senba T."/>
            <person name="Matsumura K."/>
            <person name="Nakajima Y."/>
            <person name="Mizuno T."/>
            <person name="Morinaga M."/>
            <person name="Sasaki M."/>
            <person name="Togashi T."/>
            <person name="Oyama M."/>
            <person name="Hata H."/>
            <person name="Watanabe M."/>
            <person name="Komatsu T."/>
            <person name="Mizushima-Sugano J."/>
            <person name="Satoh T."/>
            <person name="Shirai Y."/>
            <person name="Takahashi Y."/>
            <person name="Nakagawa K."/>
            <person name="Okumura K."/>
            <person name="Nagase T."/>
            <person name="Nomura N."/>
            <person name="Kikuchi H."/>
            <person name="Masuho Y."/>
            <person name="Yamashita R."/>
            <person name="Nakai K."/>
            <person name="Yada T."/>
            <person name="Nakamura Y."/>
            <person name="Ohara O."/>
            <person name="Isogai T."/>
            <person name="Sugano S."/>
        </authorList>
    </citation>
    <scope>NUCLEOTIDE SEQUENCE [LARGE SCALE MRNA] (ISOFORMS 4 AND 6)</scope>
    <source>
        <tissue>Brain</tissue>
        <tissue>Hippocampus</tissue>
    </source>
</reference>
<reference key="3">
    <citation type="journal article" date="2005" name="Nature">
        <title>The DNA sequence of the human X chromosome.</title>
        <authorList>
            <person name="Ross M.T."/>
            <person name="Grafham D.V."/>
            <person name="Coffey A.J."/>
            <person name="Scherer S."/>
            <person name="McLay K."/>
            <person name="Muzny D."/>
            <person name="Platzer M."/>
            <person name="Howell G.R."/>
            <person name="Burrows C."/>
            <person name="Bird C.P."/>
            <person name="Frankish A."/>
            <person name="Lovell F.L."/>
            <person name="Howe K.L."/>
            <person name="Ashurst J.L."/>
            <person name="Fulton R.S."/>
            <person name="Sudbrak R."/>
            <person name="Wen G."/>
            <person name="Jones M.C."/>
            <person name="Hurles M.E."/>
            <person name="Andrews T.D."/>
            <person name="Scott C.E."/>
            <person name="Searle S."/>
            <person name="Ramser J."/>
            <person name="Whittaker A."/>
            <person name="Deadman R."/>
            <person name="Carter N.P."/>
            <person name="Hunt S.E."/>
            <person name="Chen R."/>
            <person name="Cree A."/>
            <person name="Gunaratne P."/>
            <person name="Havlak P."/>
            <person name="Hodgson A."/>
            <person name="Metzker M.L."/>
            <person name="Richards S."/>
            <person name="Scott G."/>
            <person name="Steffen D."/>
            <person name="Sodergren E."/>
            <person name="Wheeler D.A."/>
            <person name="Worley K.C."/>
            <person name="Ainscough R."/>
            <person name="Ambrose K.D."/>
            <person name="Ansari-Lari M.A."/>
            <person name="Aradhya S."/>
            <person name="Ashwell R.I."/>
            <person name="Babbage A.K."/>
            <person name="Bagguley C.L."/>
            <person name="Ballabio A."/>
            <person name="Banerjee R."/>
            <person name="Barker G.E."/>
            <person name="Barlow K.F."/>
            <person name="Barrett I.P."/>
            <person name="Bates K.N."/>
            <person name="Beare D.M."/>
            <person name="Beasley H."/>
            <person name="Beasley O."/>
            <person name="Beck A."/>
            <person name="Bethel G."/>
            <person name="Blechschmidt K."/>
            <person name="Brady N."/>
            <person name="Bray-Allen S."/>
            <person name="Bridgeman A.M."/>
            <person name="Brown A.J."/>
            <person name="Brown M.J."/>
            <person name="Bonnin D."/>
            <person name="Bruford E.A."/>
            <person name="Buhay C."/>
            <person name="Burch P."/>
            <person name="Burford D."/>
            <person name="Burgess J."/>
            <person name="Burrill W."/>
            <person name="Burton J."/>
            <person name="Bye J.M."/>
            <person name="Carder C."/>
            <person name="Carrel L."/>
            <person name="Chako J."/>
            <person name="Chapman J.C."/>
            <person name="Chavez D."/>
            <person name="Chen E."/>
            <person name="Chen G."/>
            <person name="Chen Y."/>
            <person name="Chen Z."/>
            <person name="Chinault C."/>
            <person name="Ciccodicola A."/>
            <person name="Clark S.Y."/>
            <person name="Clarke G."/>
            <person name="Clee C.M."/>
            <person name="Clegg S."/>
            <person name="Clerc-Blankenburg K."/>
            <person name="Clifford K."/>
            <person name="Cobley V."/>
            <person name="Cole C.G."/>
            <person name="Conquer J.S."/>
            <person name="Corby N."/>
            <person name="Connor R.E."/>
            <person name="David R."/>
            <person name="Davies J."/>
            <person name="Davis C."/>
            <person name="Davis J."/>
            <person name="Delgado O."/>
            <person name="Deshazo D."/>
            <person name="Dhami P."/>
            <person name="Ding Y."/>
            <person name="Dinh H."/>
            <person name="Dodsworth S."/>
            <person name="Draper H."/>
            <person name="Dugan-Rocha S."/>
            <person name="Dunham A."/>
            <person name="Dunn M."/>
            <person name="Durbin K.J."/>
            <person name="Dutta I."/>
            <person name="Eades T."/>
            <person name="Ellwood M."/>
            <person name="Emery-Cohen A."/>
            <person name="Errington H."/>
            <person name="Evans K.L."/>
            <person name="Faulkner L."/>
            <person name="Francis F."/>
            <person name="Frankland J."/>
            <person name="Fraser A.E."/>
            <person name="Galgoczy P."/>
            <person name="Gilbert J."/>
            <person name="Gill R."/>
            <person name="Gloeckner G."/>
            <person name="Gregory S.G."/>
            <person name="Gribble S."/>
            <person name="Griffiths C."/>
            <person name="Grocock R."/>
            <person name="Gu Y."/>
            <person name="Gwilliam R."/>
            <person name="Hamilton C."/>
            <person name="Hart E.A."/>
            <person name="Hawes A."/>
            <person name="Heath P.D."/>
            <person name="Heitmann K."/>
            <person name="Hennig S."/>
            <person name="Hernandez J."/>
            <person name="Hinzmann B."/>
            <person name="Ho S."/>
            <person name="Hoffs M."/>
            <person name="Howden P.J."/>
            <person name="Huckle E.J."/>
            <person name="Hume J."/>
            <person name="Hunt P.J."/>
            <person name="Hunt A.R."/>
            <person name="Isherwood J."/>
            <person name="Jacob L."/>
            <person name="Johnson D."/>
            <person name="Jones S."/>
            <person name="de Jong P.J."/>
            <person name="Joseph S.S."/>
            <person name="Keenan S."/>
            <person name="Kelly S."/>
            <person name="Kershaw J.K."/>
            <person name="Khan Z."/>
            <person name="Kioschis P."/>
            <person name="Klages S."/>
            <person name="Knights A.J."/>
            <person name="Kosiura A."/>
            <person name="Kovar-Smith C."/>
            <person name="Laird G.K."/>
            <person name="Langford C."/>
            <person name="Lawlor S."/>
            <person name="Leversha M."/>
            <person name="Lewis L."/>
            <person name="Liu W."/>
            <person name="Lloyd C."/>
            <person name="Lloyd D.M."/>
            <person name="Loulseged H."/>
            <person name="Loveland J.E."/>
            <person name="Lovell J.D."/>
            <person name="Lozado R."/>
            <person name="Lu J."/>
            <person name="Lyne R."/>
            <person name="Ma J."/>
            <person name="Maheshwari M."/>
            <person name="Matthews L.H."/>
            <person name="McDowall J."/>
            <person name="McLaren S."/>
            <person name="McMurray A."/>
            <person name="Meidl P."/>
            <person name="Meitinger T."/>
            <person name="Milne S."/>
            <person name="Miner G."/>
            <person name="Mistry S.L."/>
            <person name="Morgan M."/>
            <person name="Morris S."/>
            <person name="Mueller I."/>
            <person name="Mullikin J.C."/>
            <person name="Nguyen N."/>
            <person name="Nordsiek G."/>
            <person name="Nyakatura G."/>
            <person name="O'dell C.N."/>
            <person name="Okwuonu G."/>
            <person name="Palmer S."/>
            <person name="Pandian R."/>
            <person name="Parker D."/>
            <person name="Parrish J."/>
            <person name="Pasternak S."/>
            <person name="Patel D."/>
            <person name="Pearce A.V."/>
            <person name="Pearson D.M."/>
            <person name="Pelan S.E."/>
            <person name="Perez L."/>
            <person name="Porter K.M."/>
            <person name="Ramsey Y."/>
            <person name="Reichwald K."/>
            <person name="Rhodes S."/>
            <person name="Ridler K.A."/>
            <person name="Schlessinger D."/>
            <person name="Schueler M.G."/>
            <person name="Sehra H.K."/>
            <person name="Shaw-Smith C."/>
            <person name="Shen H."/>
            <person name="Sheridan E.M."/>
            <person name="Shownkeen R."/>
            <person name="Skuce C.D."/>
            <person name="Smith M.L."/>
            <person name="Sotheran E.C."/>
            <person name="Steingruber H.E."/>
            <person name="Steward C.A."/>
            <person name="Storey R."/>
            <person name="Swann R.M."/>
            <person name="Swarbreck D."/>
            <person name="Tabor P.E."/>
            <person name="Taudien S."/>
            <person name="Taylor T."/>
            <person name="Teague B."/>
            <person name="Thomas K."/>
            <person name="Thorpe A."/>
            <person name="Timms K."/>
            <person name="Tracey A."/>
            <person name="Trevanion S."/>
            <person name="Tromans A.C."/>
            <person name="d'Urso M."/>
            <person name="Verduzco D."/>
            <person name="Villasana D."/>
            <person name="Waldron L."/>
            <person name="Wall M."/>
            <person name="Wang Q."/>
            <person name="Warren J."/>
            <person name="Warry G.L."/>
            <person name="Wei X."/>
            <person name="West A."/>
            <person name="Whitehead S.L."/>
            <person name="Whiteley M.N."/>
            <person name="Wilkinson J.E."/>
            <person name="Willey D.L."/>
            <person name="Williams G."/>
            <person name="Williams L."/>
            <person name="Williamson A."/>
            <person name="Williamson H."/>
            <person name="Wilming L."/>
            <person name="Woodmansey R.L."/>
            <person name="Wray P.W."/>
            <person name="Yen J."/>
            <person name="Zhang J."/>
            <person name="Zhou J."/>
            <person name="Zoghbi H."/>
            <person name="Zorilla S."/>
            <person name="Buck D."/>
            <person name="Reinhardt R."/>
            <person name="Poustka A."/>
            <person name="Rosenthal A."/>
            <person name="Lehrach H."/>
            <person name="Meindl A."/>
            <person name="Minx P.J."/>
            <person name="Hillier L.W."/>
            <person name="Willard H.F."/>
            <person name="Wilson R.K."/>
            <person name="Waterston R.H."/>
            <person name="Rice C.M."/>
            <person name="Vaudin M."/>
            <person name="Coulson A."/>
            <person name="Nelson D.L."/>
            <person name="Weinstock G."/>
            <person name="Sulston J.E."/>
            <person name="Durbin R.M."/>
            <person name="Hubbard T."/>
            <person name="Gibbs R.A."/>
            <person name="Beck S."/>
            <person name="Rogers J."/>
            <person name="Bentley D.R."/>
        </authorList>
    </citation>
    <scope>NUCLEOTIDE SEQUENCE [LARGE SCALE GENOMIC DNA]</scope>
</reference>
<reference key="4">
    <citation type="submission" date="2005-07" db="EMBL/GenBank/DDBJ databases">
        <authorList>
            <person name="Mural R.J."/>
            <person name="Istrail S."/>
            <person name="Sutton G.G."/>
            <person name="Florea L."/>
            <person name="Halpern A.L."/>
            <person name="Mobarry C.M."/>
            <person name="Lippert R."/>
            <person name="Walenz B."/>
            <person name="Shatkay H."/>
            <person name="Dew I."/>
            <person name="Miller J.R."/>
            <person name="Flanigan M.J."/>
            <person name="Edwards N.J."/>
            <person name="Bolanos R."/>
            <person name="Fasulo D."/>
            <person name="Halldorsson B.V."/>
            <person name="Hannenhalli S."/>
            <person name="Turner R."/>
            <person name="Yooseph S."/>
            <person name="Lu F."/>
            <person name="Nusskern D.R."/>
            <person name="Shue B.C."/>
            <person name="Zheng X.H."/>
            <person name="Zhong F."/>
            <person name="Delcher A.L."/>
            <person name="Huson D.H."/>
            <person name="Kravitz S.A."/>
            <person name="Mouchard L."/>
            <person name="Reinert K."/>
            <person name="Remington K.A."/>
            <person name="Clark A.G."/>
            <person name="Waterman M.S."/>
            <person name="Eichler E.E."/>
            <person name="Adams M.D."/>
            <person name="Hunkapiller M.W."/>
            <person name="Myers E.W."/>
            <person name="Venter J.C."/>
        </authorList>
    </citation>
    <scope>NUCLEOTIDE SEQUENCE [LARGE SCALE GENOMIC DNA]</scope>
</reference>
<reference key="5">
    <citation type="journal article" date="2004" name="Genome Res.">
        <title>The status, quality, and expansion of the NIH full-length cDNA project: the Mammalian Gene Collection (MGC).</title>
        <authorList>
            <consortium name="The MGC Project Team"/>
        </authorList>
    </citation>
    <scope>NUCLEOTIDE SEQUENCE [LARGE SCALE MRNA] (ISOFORM 6)</scope>
    <source>
        <tissue>Uterus</tissue>
    </source>
</reference>
<reference key="6">
    <citation type="journal article" date="1991" name="Genomics">
        <title>Isolation and expression analysis of a human zinc finger gene (ZNF41) located on the short arm of the X chromosome.</title>
        <authorList>
            <person name="Franze A."/>
            <person name="Archidiacono N."/>
            <person name="Rocchi M."/>
            <person name="Marino M."/>
            <person name="Grimaldi G."/>
        </authorList>
    </citation>
    <scope>NUCLEOTIDE SEQUENCE [GENOMIC DNA] OF 280-821</scope>
</reference>
<reference key="7">
    <citation type="journal article" date="2003" name="Am. J. Hum. Genet.">
        <title>Mutations in the ZNF41 gene are associated with cognitive deficits: identification of a new candidate for X-linked mental retardation.</title>
        <authorList>
            <person name="Shoichet S.A."/>
            <person name="Hoffmann K."/>
            <person name="Menzel C."/>
            <person name="Trautmann U."/>
            <person name="Moser B."/>
            <person name="Hoeltzenbein M."/>
            <person name="Echenne B."/>
            <person name="Partington M."/>
            <person name="Van Bokhoven H."/>
            <person name="Moraine C."/>
            <person name="Fryns J.-P."/>
            <person name="Chelly J."/>
            <person name="Rott H.-D."/>
            <person name="Ropers H.-H."/>
            <person name="Kalscheuer V.M."/>
        </authorList>
    </citation>
    <scope>ALTERNATIVE SPLICING</scope>
    <scope>TISSUE SPECIFICITY</scope>
    <scope>CHROMOSOMAL TRANSLOCATION</scope>
    <scope>VARIANTS LEU-153; ARG-167 AND GLU-357</scope>
    <scope>POSSIBLE ASSOCIATION OF VARIANT LEU-153 WITH X-LINKED INTELLECTUAL DISABILITY</scope>
</reference>
<reference key="8">
    <citation type="journal article" date="2017" name="Nat. Struct. Mol. Biol.">
        <title>Site-specific mapping of the human SUMO proteome reveals co-modification with phosphorylation.</title>
        <authorList>
            <person name="Hendriks I.A."/>
            <person name="Lyon D."/>
            <person name="Young C."/>
            <person name="Jensen L.J."/>
            <person name="Vertegaal A.C."/>
            <person name="Nielsen M.L."/>
        </authorList>
    </citation>
    <scope>SUMOYLATION [LARGE SCALE ANALYSIS] AT LYS-120 AND LYS-647</scope>
    <scope>IDENTIFICATION BY MASS SPECTROMETRY [LARGE SCALE ANALYSIS]</scope>
</reference>
<reference key="9">
    <citation type="journal article" date="2013" name="Am. J. Hum. Genet.">
        <title>XLID-causing mutations and associated genes challenged in light of data from large-scale human exome sequencing.</title>
        <authorList>
            <person name="Piton A."/>
            <person name="Redin C."/>
            <person name="Mandel J.L."/>
        </authorList>
    </citation>
    <scope>LACK OF ASSOCIATION OF VARIANT LEU-153 WITH X-LINKED INTELLECTUAL DISABILITY</scope>
</reference>
<proteinExistence type="evidence at protein level"/>
<feature type="chain" id="PRO_0000047374" description="Zinc finger protein 41">
    <location>
        <begin position="1"/>
        <end position="821"/>
    </location>
</feature>
<feature type="domain" description="KRAB" evidence="2">
    <location>
        <begin position="69"/>
        <end position="140"/>
    </location>
</feature>
<feature type="zinc finger region" description="C2H2-type 1" evidence="1">
    <location>
        <begin position="313"/>
        <end position="335"/>
    </location>
</feature>
<feature type="zinc finger region" description="C2H2-type 2; degenerate" evidence="1">
    <location>
        <begin position="341"/>
        <end position="364"/>
    </location>
</feature>
<feature type="zinc finger region" description="C2H2-type 3" evidence="1">
    <location>
        <begin position="369"/>
        <end position="391"/>
    </location>
</feature>
<feature type="zinc finger region" description="C2H2-type 4" evidence="1">
    <location>
        <begin position="397"/>
        <end position="419"/>
    </location>
</feature>
<feature type="zinc finger region" description="C2H2-type 5" evidence="1">
    <location>
        <begin position="425"/>
        <end position="447"/>
    </location>
</feature>
<feature type="zinc finger region" description="C2H2-type 6" evidence="1">
    <location>
        <begin position="453"/>
        <end position="475"/>
    </location>
</feature>
<feature type="zinc finger region" description="C2H2-type 7" evidence="1">
    <location>
        <begin position="481"/>
        <end position="503"/>
    </location>
</feature>
<feature type="zinc finger region" description="C2H2-type 8" evidence="1">
    <location>
        <begin position="509"/>
        <end position="531"/>
    </location>
</feature>
<feature type="zinc finger region" description="C2H2-type 9" evidence="1">
    <location>
        <begin position="537"/>
        <end position="559"/>
    </location>
</feature>
<feature type="zinc finger region" description="C2H2-type 10" evidence="1">
    <location>
        <begin position="565"/>
        <end position="587"/>
    </location>
</feature>
<feature type="zinc finger region" description="C2H2-type 11" evidence="1">
    <location>
        <begin position="593"/>
        <end position="615"/>
    </location>
</feature>
<feature type="zinc finger region" description="C2H2-type 12" evidence="1">
    <location>
        <begin position="621"/>
        <end position="643"/>
    </location>
</feature>
<feature type="zinc finger region" description="C2H2-type 13" evidence="1">
    <location>
        <begin position="649"/>
        <end position="671"/>
    </location>
</feature>
<feature type="zinc finger region" description="C2H2-type 14" evidence="1">
    <location>
        <begin position="677"/>
        <end position="699"/>
    </location>
</feature>
<feature type="zinc finger region" description="C2H2-type 15" evidence="1">
    <location>
        <begin position="705"/>
        <end position="727"/>
    </location>
</feature>
<feature type="zinc finger region" description="C2H2-type 16" evidence="1">
    <location>
        <begin position="733"/>
        <end position="755"/>
    </location>
</feature>
<feature type="zinc finger region" description="C2H2-type 17" evidence="1">
    <location>
        <begin position="761"/>
        <end position="783"/>
    </location>
</feature>
<feature type="zinc finger region" description="C2H2-type 18" evidence="1">
    <location>
        <begin position="789"/>
        <end position="811"/>
    </location>
</feature>
<feature type="region of interest" description="Disordered" evidence="3">
    <location>
        <begin position="1"/>
        <end position="55"/>
    </location>
</feature>
<feature type="compositionally biased region" description="Basic and acidic residues" evidence="3">
    <location>
        <begin position="24"/>
        <end position="35"/>
    </location>
</feature>
<feature type="cross-link" description="Glycyl lysine isopeptide (Lys-Gly) (interchain with G-Cter in SUMO2)" evidence="10">
    <location>
        <position position="120"/>
    </location>
</feature>
<feature type="cross-link" description="Glycyl lysine isopeptide (Lys-Gly) (interchain with G-Cter in SUMO2)" evidence="10">
    <location>
        <position position="647"/>
    </location>
</feature>
<feature type="splice variant" id="VSP_006887" description="In isoform 4." evidence="5">
    <location>
        <begin position="1"/>
        <end position="128"/>
    </location>
</feature>
<feature type="splice variant" id="VSP_006883" description="In isoform 7 and isoform 2." evidence="7">
    <original>MAANGDSPPWSPALAAEGRGSSCEVRRERTPEARIHSVKRYPDLSPGPKGRSSADHAALN</original>
    <variation>MGTLPHGPRPWLQRDVAAHV</variation>
    <location>
        <begin position="1"/>
        <end position="60"/>
    </location>
</feature>
<feature type="splice variant" id="VSP_006884" description="In isoform 3." evidence="7">
    <original>MAANGDSPPWSPALAAEGRGSSCEVRRERTPEARIHSVKRYPDLSPGPKGRS</original>
    <variation>MGTLPHGPRPWLQRDVAAHV</variation>
    <location>
        <begin position="1"/>
        <end position="52"/>
    </location>
</feature>
<feature type="splice variant" id="VSP_006885" description="In isoform 6 and isoform 8." evidence="5 6">
    <location>
        <begin position="25"/>
        <end position="66"/>
    </location>
</feature>
<feature type="splice variant" id="VSP_006886" description="In isoform 5." evidence="7">
    <location>
        <begin position="53"/>
        <end position="60"/>
    </location>
</feature>
<feature type="splice variant" id="VSP_006888" description="In isoform 7 and isoform 8." evidence="7">
    <location>
        <begin position="141"/>
        <end position="176"/>
    </location>
</feature>
<feature type="sequence variant" id="VAR_021785" description="Found in patients with X-linked intellectual disability; uncertain significance; dbSNP:rs104894955." evidence="4">
    <original>P</original>
    <variation>L</variation>
    <location>
        <position position="153"/>
    </location>
</feature>
<feature type="sequence variant" id="VAR_021786" description="In dbSNP:rs17147624." evidence="4">
    <original>I</original>
    <variation>R</variation>
    <location>
        <position position="167"/>
    </location>
</feature>
<feature type="sequence variant" id="VAR_021787" description="In dbSNP:rs2498170." evidence="4">
    <original>D</original>
    <variation>E</variation>
    <location>
        <position position="357"/>
    </location>
</feature>
<feature type="sequence conflict" description="In Ref. 1; CAB53039." evidence="7" ref="1">
    <original>Q</original>
    <variation>R</variation>
    <location>
        <position position="111"/>
    </location>
</feature>
<organism>
    <name type="scientific">Homo sapiens</name>
    <name type="common">Human</name>
    <dbReference type="NCBI Taxonomy" id="9606"/>
    <lineage>
        <taxon>Eukaryota</taxon>
        <taxon>Metazoa</taxon>
        <taxon>Chordata</taxon>
        <taxon>Craniata</taxon>
        <taxon>Vertebrata</taxon>
        <taxon>Euteleostomi</taxon>
        <taxon>Mammalia</taxon>
        <taxon>Eutheria</taxon>
        <taxon>Euarchontoglires</taxon>
        <taxon>Primates</taxon>
        <taxon>Haplorrhini</taxon>
        <taxon>Catarrhini</taxon>
        <taxon>Hominidae</taxon>
        <taxon>Homo</taxon>
    </lineage>
</organism>
<gene>
    <name type="primary">ZNF41</name>
</gene>
<protein>
    <recommendedName>
        <fullName>Zinc finger protein 41</fullName>
    </recommendedName>
</protein>
<comment type="function">
    <text>May be involved in transcriptional regulation.</text>
</comment>
<comment type="interaction">
    <interactant intactId="EBI-2681830">
        <id>P51814</id>
    </interactant>
    <interactant intactId="EBI-10175124">
        <id>Q8IZU0</id>
        <label>FAM9B</label>
    </interactant>
    <organismsDiffer>false</organismsDiffer>
    <experiments>3</experiments>
</comment>
<comment type="interaction">
    <interactant intactId="EBI-2681830">
        <id>P51814</id>
    </interactant>
    <interactant intactId="EBI-10172290">
        <id>P60409</id>
        <label>KRTAP10-7</label>
    </interactant>
    <organismsDiffer>false</organismsDiffer>
    <experiments>3</experiments>
</comment>
<comment type="interaction">
    <interactant intactId="EBI-12700258">
        <id>P51814-6</id>
    </interactant>
    <interactant intactId="EBI-10175124">
        <id>Q8IZU0</id>
        <label>FAM9B</label>
    </interactant>
    <organismsDiffer>false</organismsDiffer>
    <experiments>6</experiments>
</comment>
<comment type="interaction">
    <interactant intactId="EBI-12700258">
        <id>P51814-6</id>
    </interactant>
    <interactant intactId="EBI-1048159">
        <id>P55081</id>
        <label>MFAP1</label>
    </interactant>
    <organismsDiffer>false</organismsDiffer>
    <experiments>3</experiments>
</comment>
<comment type="interaction">
    <interactant intactId="EBI-12700258">
        <id>P51814-6</id>
    </interactant>
    <interactant intactId="EBI-3920396">
        <id>Q6ZUT1</id>
        <label>NKAPD1</label>
    </interactant>
    <organismsDiffer>false</organismsDiffer>
    <experiments>3</experiments>
</comment>
<comment type="interaction">
    <interactant intactId="EBI-12700258">
        <id>P51814-6</id>
    </interactant>
    <interactant intactId="EBI-395959">
        <id>Q15287</id>
        <label>RNPS1</label>
    </interactant>
    <organismsDiffer>false</organismsDiffer>
    <experiments>3</experiments>
</comment>
<comment type="subcellular location">
    <subcellularLocation>
        <location evidence="7">Nucleus</location>
    </subcellularLocation>
</comment>
<comment type="alternative products">
    <event type="alternative splicing"/>
    <isoform>
        <id>P51814-1</id>
        <name>1</name>
        <sequence type="displayed"/>
    </isoform>
    <isoform>
        <id>P51814-2</id>
        <name>2</name>
        <sequence type="described" ref="VSP_006883"/>
    </isoform>
    <isoform>
        <id>P51814-3</id>
        <name>3</name>
        <sequence type="described" ref="VSP_006884"/>
    </isoform>
    <isoform>
        <id>P51814-4</id>
        <name>4</name>
        <sequence type="described" ref="VSP_006887"/>
    </isoform>
    <isoform>
        <id>P51814-5</id>
        <name>5</name>
        <sequence type="described" ref="VSP_006886"/>
    </isoform>
    <isoform>
        <id>P51814-6</id>
        <name>6</name>
        <sequence type="described" ref="VSP_006885"/>
    </isoform>
    <isoform>
        <id>P51814-7</id>
        <name>7</name>
        <sequence type="described" ref="VSP_006883 VSP_006888"/>
    </isoform>
    <isoform>
        <id>P51814-8</id>
        <name>8</name>
        <sequence type="described" ref="VSP_006885 VSP_006888"/>
    </isoform>
    <text>Additional isoforms seem to exist.</text>
</comment>
<comment type="tissue specificity">
    <text evidence="4">Expressed in the heart, brain, placenta, lung, liver, skeletal muscle, kidney and pancreas.</text>
</comment>
<comment type="disease">
    <text evidence="4">A chromosomal aberration involving ZNF41 has been found in a patient with severe intellectual disability. Translocation t(X;7)(p11.3;q11.21).</text>
</comment>
<comment type="similarity">
    <text evidence="7">Belongs to the krueppel C2H2-type zinc-finger protein family.</text>
</comment>
<comment type="caution">
    <text evidence="8 9">Although ZNF41 has been reported to be involved in X-linked intellectual disability (PubMed:14628291), its pathological role is questionable (PubMed:23871722).</text>
</comment>
<accession>P51814</accession>
<accession>A8K1V6</accession>
<accession>B4DH01</accession>
<accession>Q96LE8</accession>
<accession>Q9UMC4</accession>
<accession>Q9UMV5</accession>
<accession>Q9UMV6</accession>
<accession>Q9UMV7</accession>
<accession>Q9UMV8</accession>
<accession>Q9UMV9</accession>
<accession>Q9UMW0</accession>
<accession>Q9UMW1</accession>
<sequence>MAANGDSPPWSPALAAEGRGSSCEVRRERTPEARIHSVKRYPDLSPGPKGRSSADHAALNSIVSLQASVSFEDVTVDFSKEEWQHLDPAQRRLYWDVTLENYSHLLSVGYQIPKSEAAFKLEQGEGPWMLEGEAPHQSCSGEAIGKMQQQGIPGGIFFHCERFDQPIGEDSLCSILEELWQDNDQLEQRQENQNNLLSHVKVLIKERGYEHKNIEKIIHVTTKLVPSIKRLHNCDTILKHTLNSHNHNRNSATKNLGKIFGNGNNFPHSPSSTKNENAKTGANSCEHDHYEKHLSHKQAPTHHQKIHPEEKLYVCTECVMGFTQKSHLFEHQRIHAGEKSRECDKSNKVFPQKPQVDVHPSVYTGEKPYLCTQCGKVFTLKSNLITHQKIHTGQKPYKCSECGKAFFQRSDLFRHLRIHTGEKPYECSECGKGFSQNSDLSIHQKTHTGEKHYECNECGKAFTRKSALRMHQRIHTGEKPYVCADCGKAFIQKSHFNTHQRIHTGEKPYECSDCGKSFTKKSQLHVHQRIHTGEKPYICTECGKVFTHRTNLTTHQKTHTGEKPYMCAECGKAFTDQSNLIKHQKTHTGEKPYKCNGCGKAFIWKSRLKIHQKSHIGERHYECKDCGKAFIQKSTLSVHQRIHTGEKPYVCPECGKAFIQKSHFIAHHRIHTGEKPYECSDCGKCFTKKSQLRVHQKIHTGEKPNICAECGKAFTDRSNLITHQKIHTREKPYECGDCGKTFTWKSRLNIHQKSHTGERHYECSKCGKAFIQKATLSMHQIIHTGKKPYACTECQKAFTDRSNLIKHQKMHSGEKRYKASD</sequence>
<evidence type="ECO:0000255" key="1">
    <source>
        <dbReference type="PROSITE-ProRule" id="PRU00042"/>
    </source>
</evidence>
<evidence type="ECO:0000255" key="2">
    <source>
        <dbReference type="PROSITE-ProRule" id="PRU00119"/>
    </source>
</evidence>
<evidence type="ECO:0000256" key="3">
    <source>
        <dbReference type="SAM" id="MobiDB-lite"/>
    </source>
</evidence>
<evidence type="ECO:0000269" key="4">
    <source>
    </source>
</evidence>
<evidence type="ECO:0000303" key="5">
    <source>
    </source>
</evidence>
<evidence type="ECO:0000303" key="6">
    <source>
    </source>
</evidence>
<evidence type="ECO:0000305" key="7"/>
<evidence type="ECO:0000305" key="8">
    <source>
    </source>
</evidence>
<evidence type="ECO:0000305" key="9">
    <source>
    </source>
</evidence>
<evidence type="ECO:0007744" key="10">
    <source>
    </source>
</evidence>
<keyword id="KW-0025">Alternative splicing</keyword>
<keyword id="KW-0160">Chromosomal rearrangement</keyword>
<keyword id="KW-0238">DNA-binding</keyword>
<keyword id="KW-1017">Isopeptide bond</keyword>
<keyword id="KW-0479">Metal-binding</keyword>
<keyword id="KW-0539">Nucleus</keyword>
<keyword id="KW-1267">Proteomics identification</keyword>
<keyword id="KW-1185">Reference proteome</keyword>
<keyword id="KW-0677">Repeat</keyword>
<keyword id="KW-0804">Transcription</keyword>
<keyword id="KW-0805">Transcription regulation</keyword>
<keyword id="KW-0832">Ubl conjugation</keyword>
<keyword id="KW-0862">Zinc</keyword>
<keyword id="KW-0863">Zinc-finger</keyword>
<name>ZNF41_HUMAN</name>